<name>PSBT_HELAN</name>
<geneLocation type="chloroplast"/>
<feature type="chain" id="PRO_0000276298" description="Photosystem II reaction center protein T">
    <location>
        <begin position="1"/>
        <end position="33"/>
    </location>
</feature>
<feature type="transmembrane region" description="Helical" evidence="1">
    <location>
        <begin position="3"/>
        <end position="23"/>
    </location>
</feature>
<reference key="1">
    <citation type="submission" date="2006-01" db="EMBL/GenBank/DDBJ databases">
        <title>A comparison of the first two published chloroplast genomes in Asteraceae: Lactuca and Helianthus.</title>
        <authorList>
            <person name="Timme R.E."/>
            <person name="Kuehl J.V."/>
            <person name="Boore J.L."/>
            <person name="Jansen R.K."/>
        </authorList>
    </citation>
    <scope>NUCLEOTIDE SEQUENCE [LARGE SCALE GENOMIC DNA]</scope>
    <source>
        <strain>cv. HA383</strain>
    </source>
</reference>
<keyword id="KW-0150">Chloroplast</keyword>
<keyword id="KW-0472">Membrane</keyword>
<keyword id="KW-0602">Photosynthesis</keyword>
<keyword id="KW-0604">Photosystem II</keyword>
<keyword id="KW-0934">Plastid</keyword>
<keyword id="KW-0793">Thylakoid</keyword>
<keyword id="KW-0812">Transmembrane</keyword>
<keyword id="KW-1133">Transmembrane helix</keyword>
<protein>
    <recommendedName>
        <fullName evidence="1">Photosystem II reaction center protein T</fullName>
        <shortName evidence="1">PSII-T</shortName>
    </recommendedName>
</protein>
<comment type="function">
    <text evidence="1">Found at the monomer-monomer interface of the photosystem II (PS II) dimer, plays a role in assembly and dimerization of PSII. PSII is a light-driven water plastoquinone oxidoreductase, using light energy to abstract electrons from H(2)O, generating a proton gradient subsequently used for ATP formation.</text>
</comment>
<comment type="subunit">
    <text evidence="1">PSII is composed of 1 copy each of membrane proteins PsbA, PsbB, PsbC, PsbD, PsbE, PsbF, PsbH, PsbI, PsbJ, PsbK, PsbL, PsbM, PsbT, PsbY, PsbZ, Psb30/Ycf12, at least 3 peripheral proteins of the oxygen-evolving complex and a large number of cofactors. It forms dimeric complexes.</text>
</comment>
<comment type="subcellular location">
    <subcellularLocation>
        <location evidence="1">Plastid</location>
        <location evidence="1">Chloroplast thylakoid membrane</location>
        <topology evidence="1">Single-pass membrane protein</topology>
    </subcellularLocation>
</comment>
<comment type="similarity">
    <text evidence="1">Belongs to the PsbT family.</text>
</comment>
<accession>Q1KXT2</accession>
<proteinExistence type="inferred from homology"/>
<gene>
    <name evidence="1" type="primary">psbT</name>
</gene>
<organism>
    <name type="scientific">Helianthus annuus</name>
    <name type="common">Common sunflower</name>
    <dbReference type="NCBI Taxonomy" id="4232"/>
    <lineage>
        <taxon>Eukaryota</taxon>
        <taxon>Viridiplantae</taxon>
        <taxon>Streptophyta</taxon>
        <taxon>Embryophyta</taxon>
        <taxon>Tracheophyta</taxon>
        <taxon>Spermatophyta</taxon>
        <taxon>Magnoliopsida</taxon>
        <taxon>eudicotyledons</taxon>
        <taxon>Gunneridae</taxon>
        <taxon>Pentapetalae</taxon>
        <taxon>asterids</taxon>
        <taxon>campanulids</taxon>
        <taxon>Asterales</taxon>
        <taxon>Asteraceae</taxon>
        <taxon>Asteroideae</taxon>
        <taxon>Heliantheae alliance</taxon>
        <taxon>Heliantheae</taxon>
        <taxon>Helianthus</taxon>
    </lineage>
</organism>
<evidence type="ECO:0000255" key="1">
    <source>
        <dbReference type="HAMAP-Rule" id="MF_00808"/>
    </source>
</evidence>
<sequence length="33" mass="3795">MEALVYTFLLVSTLGIIFFAIFFREPPTISTKK</sequence>
<dbReference type="EMBL" id="DQ383815">
    <property type="protein sequence ID" value="ABD47172.1"/>
    <property type="molecule type" value="Genomic_DNA"/>
</dbReference>
<dbReference type="RefSeq" id="YP_588144.1">
    <property type="nucleotide sequence ID" value="NC_007977.1"/>
</dbReference>
<dbReference type="SMR" id="Q1KXT2"/>
<dbReference type="GeneID" id="4055661"/>
<dbReference type="KEGG" id="han:4055661"/>
<dbReference type="OrthoDB" id="1558483at2759"/>
<dbReference type="GO" id="GO:0009535">
    <property type="term" value="C:chloroplast thylakoid membrane"/>
    <property type="evidence" value="ECO:0007669"/>
    <property type="project" value="UniProtKB-SubCell"/>
</dbReference>
<dbReference type="GO" id="GO:0009539">
    <property type="term" value="C:photosystem II reaction center"/>
    <property type="evidence" value="ECO:0007669"/>
    <property type="project" value="InterPro"/>
</dbReference>
<dbReference type="GO" id="GO:0015979">
    <property type="term" value="P:photosynthesis"/>
    <property type="evidence" value="ECO:0007669"/>
    <property type="project" value="UniProtKB-UniRule"/>
</dbReference>
<dbReference type="HAMAP" id="MF_00808">
    <property type="entry name" value="PSII_PsbT"/>
    <property type="match status" value="1"/>
</dbReference>
<dbReference type="InterPro" id="IPR001743">
    <property type="entry name" value="PSII_PsbT"/>
</dbReference>
<dbReference type="InterPro" id="IPR037268">
    <property type="entry name" value="PSII_PsbT_sf"/>
</dbReference>
<dbReference type="PANTHER" id="PTHR36411">
    <property type="match status" value="1"/>
</dbReference>
<dbReference type="PANTHER" id="PTHR36411:SF2">
    <property type="entry name" value="PHOTOSYSTEM II REACTION CENTER PROTEIN T"/>
    <property type="match status" value="1"/>
</dbReference>
<dbReference type="Pfam" id="PF01405">
    <property type="entry name" value="PsbT"/>
    <property type="match status" value="1"/>
</dbReference>
<dbReference type="SUPFAM" id="SSF161029">
    <property type="entry name" value="Photosystem II reaction center protein T, PsbT"/>
    <property type="match status" value="1"/>
</dbReference>